<proteinExistence type="inferred from homology"/>
<dbReference type="EC" id="6.1.1.12"/>
<dbReference type="EMBL" id="AAFI02000008">
    <property type="protein sequence ID" value="EAL71270.1"/>
    <property type="molecule type" value="Genomic_DNA"/>
</dbReference>
<dbReference type="RefSeq" id="XP_645306.1">
    <property type="nucleotide sequence ID" value="XM_640214.1"/>
</dbReference>
<dbReference type="SMR" id="Q75JQ1"/>
<dbReference type="FunCoup" id="Q75JQ1">
    <property type="interactions" value="1129"/>
</dbReference>
<dbReference type="STRING" id="44689.Q75JQ1"/>
<dbReference type="PaxDb" id="44689-DDB0231308"/>
<dbReference type="EnsemblProtists" id="EAL71270">
    <property type="protein sequence ID" value="EAL71270"/>
    <property type="gene ID" value="DDB_G0272236"/>
</dbReference>
<dbReference type="GeneID" id="8618472"/>
<dbReference type="KEGG" id="ddi:DDB_G0272236"/>
<dbReference type="dictyBase" id="DDB_G0272236">
    <property type="gene designation" value="aspS1"/>
</dbReference>
<dbReference type="VEuPathDB" id="AmoebaDB:DDB_G0272236"/>
<dbReference type="eggNOG" id="KOG0556">
    <property type="taxonomic scope" value="Eukaryota"/>
</dbReference>
<dbReference type="HOGENOM" id="CLU_004553_2_1_1"/>
<dbReference type="InParanoid" id="Q75JQ1"/>
<dbReference type="OMA" id="WVHEIRD"/>
<dbReference type="PhylomeDB" id="Q75JQ1"/>
<dbReference type="Reactome" id="R-DDI-9856649">
    <property type="pathway name" value="Transcriptional and post-translational regulation of MITF-M expression and activity"/>
</dbReference>
<dbReference type="PRO" id="PR:Q75JQ1"/>
<dbReference type="Proteomes" id="UP000002195">
    <property type="component" value="Chromosome 2"/>
</dbReference>
<dbReference type="GO" id="GO:0017101">
    <property type="term" value="C:aminoacyl-tRNA synthetase multienzyme complex"/>
    <property type="evidence" value="ECO:0000318"/>
    <property type="project" value="GO_Central"/>
</dbReference>
<dbReference type="GO" id="GO:0005737">
    <property type="term" value="C:cytoplasm"/>
    <property type="evidence" value="ECO:0000250"/>
    <property type="project" value="dictyBase"/>
</dbReference>
<dbReference type="GO" id="GO:0005829">
    <property type="term" value="C:cytosol"/>
    <property type="evidence" value="ECO:0000318"/>
    <property type="project" value="GO_Central"/>
</dbReference>
<dbReference type="GO" id="GO:0045335">
    <property type="term" value="C:phagocytic vesicle"/>
    <property type="evidence" value="ECO:0007005"/>
    <property type="project" value="dictyBase"/>
</dbReference>
<dbReference type="GO" id="GO:0004815">
    <property type="term" value="F:aspartate-tRNA ligase activity"/>
    <property type="evidence" value="ECO:0000318"/>
    <property type="project" value="GO_Central"/>
</dbReference>
<dbReference type="GO" id="GO:0005524">
    <property type="term" value="F:ATP binding"/>
    <property type="evidence" value="ECO:0007669"/>
    <property type="project" value="UniProtKB-KW"/>
</dbReference>
<dbReference type="GO" id="GO:0003723">
    <property type="term" value="F:RNA binding"/>
    <property type="evidence" value="ECO:0000318"/>
    <property type="project" value="GO_Central"/>
</dbReference>
<dbReference type="GO" id="GO:0006422">
    <property type="term" value="P:aspartyl-tRNA aminoacylation"/>
    <property type="evidence" value="ECO:0000318"/>
    <property type="project" value="GO_Central"/>
</dbReference>
<dbReference type="GO" id="GO:0009617">
    <property type="term" value="P:response to bacterium"/>
    <property type="evidence" value="ECO:0007007"/>
    <property type="project" value="dictyBase"/>
</dbReference>
<dbReference type="CDD" id="cd04320">
    <property type="entry name" value="AspRS_cyto_N"/>
    <property type="match status" value="1"/>
</dbReference>
<dbReference type="CDD" id="cd00776">
    <property type="entry name" value="AsxRS_core"/>
    <property type="match status" value="1"/>
</dbReference>
<dbReference type="FunFam" id="3.30.930.10:FF:000013">
    <property type="entry name" value="Aspartate--tRNA ligase, cytoplasmic"/>
    <property type="match status" value="1"/>
</dbReference>
<dbReference type="FunFam" id="2.40.50.140:FF:000132">
    <property type="entry name" value="Aspartyl-tRNA synthetase, cytoplasmic"/>
    <property type="match status" value="1"/>
</dbReference>
<dbReference type="Gene3D" id="3.30.930.10">
    <property type="entry name" value="Bira Bifunctional Protein, Domain 2"/>
    <property type="match status" value="1"/>
</dbReference>
<dbReference type="Gene3D" id="2.40.50.140">
    <property type="entry name" value="Nucleic acid-binding proteins"/>
    <property type="match status" value="1"/>
</dbReference>
<dbReference type="HAMAP" id="MF_02075">
    <property type="entry name" value="Asp_tRNA_synth_type2"/>
    <property type="match status" value="1"/>
</dbReference>
<dbReference type="InterPro" id="IPR004364">
    <property type="entry name" value="Aa-tRNA-synt_II"/>
</dbReference>
<dbReference type="InterPro" id="IPR006195">
    <property type="entry name" value="aa-tRNA-synth_II"/>
</dbReference>
<dbReference type="InterPro" id="IPR045864">
    <property type="entry name" value="aa-tRNA-synth_II/BPL/LPL"/>
</dbReference>
<dbReference type="InterPro" id="IPR004523">
    <property type="entry name" value="Asp-tRNA_synthase_2"/>
</dbReference>
<dbReference type="InterPro" id="IPR002312">
    <property type="entry name" value="Asp/Asn-tRNA-synth_IIb"/>
</dbReference>
<dbReference type="InterPro" id="IPR012340">
    <property type="entry name" value="NA-bd_OB-fold"/>
</dbReference>
<dbReference type="NCBIfam" id="TIGR00458">
    <property type="entry name" value="aspS_nondisc"/>
    <property type="match status" value="1"/>
</dbReference>
<dbReference type="NCBIfam" id="NF003483">
    <property type="entry name" value="PRK05159.1"/>
    <property type="match status" value="1"/>
</dbReference>
<dbReference type="PANTHER" id="PTHR43450:SF1">
    <property type="entry name" value="ASPARTATE--TRNA LIGASE, CYTOPLASMIC"/>
    <property type="match status" value="1"/>
</dbReference>
<dbReference type="PANTHER" id="PTHR43450">
    <property type="entry name" value="ASPARTYL-TRNA SYNTHETASE"/>
    <property type="match status" value="1"/>
</dbReference>
<dbReference type="Pfam" id="PF00152">
    <property type="entry name" value="tRNA-synt_2"/>
    <property type="match status" value="1"/>
</dbReference>
<dbReference type="PRINTS" id="PR01042">
    <property type="entry name" value="TRNASYNTHASP"/>
</dbReference>
<dbReference type="SUPFAM" id="SSF55681">
    <property type="entry name" value="Class II aaRS and biotin synthetases"/>
    <property type="match status" value="1"/>
</dbReference>
<dbReference type="SUPFAM" id="SSF50249">
    <property type="entry name" value="Nucleic acid-binding proteins"/>
    <property type="match status" value="1"/>
</dbReference>
<dbReference type="PROSITE" id="PS50862">
    <property type="entry name" value="AA_TRNA_LIGASE_II"/>
    <property type="match status" value="1"/>
</dbReference>
<comment type="catalytic activity">
    <reaction>
        <text>tRNA(Asp) + L-aspartate + ATP = L-aspartyl-tRNA(Asp) + AMP + diphosphate</text>
        <dbReference type="Rhea" id="RHEA:19649"/>
        <dbReference type="Rhea" id="RHEA-COMP:9660"/>
        <dbReference type="Rhea" id="RHEA-COMP:9678"/>
        <dbReference type="ChEBI" id="CHEBI:29991"/>
        <dbReference type="ChEBI" id="CHEBI:30616"/>
        <dbReference type="ChEBI" id="CHEBI:33019"/>
        <dbReference type="ChEBI" id="CHEBI:78442"/>
        <dbReference type="ChEBI" id="CHEBI:78516"/>
        <dbReference type="ChEBI" id="CHEBI:456215"/>
        <dbReference type="EC" id="6.1.1.12"/>
    </reaction>
</comment>
<comment type="subcellular location">
    <subcellularLocation>
        <location evidence="1">Cytoplasm</location>
    </subcellularLocation>
</comment>
<comment type="similarity">
    <text evidence="3">Belongs to the class-II aminoacyl-tRNA synthetase family. Type 2 subfamily.</text>
</comment>
<protein>
    <recommendedName>
        <fullName>Aspartate--tRNA ligase, cytoplasmic 1</fullName>
        <ecNumber>6.1.1.12</ecNumber>
    </recommendedName>
    <alternativeName>
        <fullName>Aspartyl-tRNA synthetase 1</fullName>
        <shortName>AspRS 1</shortName>
    </alternativeName>
</protein>
<sequence length="576" mass="64935">MSETTPVPVGEAGEKSATALKKEQKKLEKEKKIAEAKAKKAAEKSAASGNSGEQKNEKKQEQVEENNSNWGELPMNQSKEKITREWTDVSQLTESLVGKSVLIRARLSTSRLQGANLCFVQLRDGLYTVQAVVAKGGSNSKSMVQFVGQVPKESIVDVQATVVSTSVPIESCTQKSVELQVSSFFIVSKSTLLPLQIEDLSRAQPLLDKQEDDLKQLEQLLQNTNLNEQEKTDLEKKKSECIKFVNVSQEKRLDNRALDLRVPAHQSIFRLQSGVCTLFREQLLGEGFIEIHSPKIISAASESGASVFKLNYFNTHAYLAQSPQLYKQMAICADFNKVFEIGPVFRAENSNTHRHLTEFVGLDLEMTFKDHYHEALDTLDRLMTSIFRGLETRFAKEIESVNTQYPFEPFKFTYPSPRFTFDEAAAMLAELNDPDYIVKDNDFNTRQEKRLGKIIKEKFGVDFFIVDKFHVEVRPFYTMPDPNNPQWANAYDLFMRGEEICSGAQRIHDPELLEKSAKSHGVVIEDIQGYIDSFKYGCSQHAGGGVGLERVVMLYLGLGNIRKASFCPRDPTRLTP</sequence>
<feature type="chain" id="PRO_0000327967" description="Aspartate--tRNA ligase, cytoplasmic 1">
    <location>
        <begin position="1"/>
        <end position="576"/>
    </location>
</feature>
<feature type="region of interest" description="Disordered" evidence="2">
    <location>
        <begin position="1"/>
        <end position="78"/>
    </location>
</feature>
<feature type="region of interest" description="Aspartate" evidence="1">
    <location>
        <begin position="324"/>
        <end position="327"/>
    </location>
</feature>
<feature type="compositionally biased region" description="Basic and acidic residues" evidence="2">
    <location>
        <begin position="20"/>
        <end position="43"/>
    </location>
</feature>
<feature type="binding site" evidence="1">
    <location>
        <position position="302"/>
    </location>
    <ligand>
        <name>L-aspartate</name>
        <dbReference type="ChEBI" id="CHEBI:29991"/>
    </ligand>
</feature>
<feature type="binding site" evidence="1">
    <location>
        <begin position="346"/>
        <end position="348"/>
    </location>
    <ligand>
        <name>ATP</name>
        <dbReference type="ChEBI" id="CHEBI:30616"/>
    </ligand>
</feature>
<feature type="binding site" evidence="1">
    <location>
        <position position="346"/>
    </location>
    <ligand>
        <name>L-aspartate</name>
        <dbReference type="ChEBI" id="CHEBI:29991"/>
    </ligand>
</feature>
<feature type="binding site" evidence="1">
    <location>
        <begin position="354"/>
        <end position="356"/>
    </location>
    <ligand>
        <name>ATP</name>
        <dbReference type="ChEBI" id="CHEBI:30616"/>
    </ligand>
</feature>
<feature type="binding site" evidence="1">
    <location>
        <position position="499"/>
    </location>
    <ligand>
        <name>ATP</name>
        <dbReference type="ChEBI" id="CHEBI:30616"/>
    </ligand>
</feature>
<feature type="binding site" evidence="1">
    <location>
        <position position="502"/>
    </location>
    <ligand>
        <name>L-aspartate</name>
        <dbReference type="ChEBI" id="CHEBI:29991"/>
    </ligand>
</feature>
<feature type="binding site" evidence="1">
    <location>
        <position position="506"/>
    </location>
    <ligand>
        <name>L-aspartate</name>
        <dbReference type="ChEBI" id="CHEBI:29991"/>
    </ligand>
</feature>
<feature type="binding site" evidence="1">
    <location>
        <begin position="547"/>
        <end position="550"/>
    </location>
    <ligand>
        <name>ATP</name>
        <dbReference type="ChEBI" id="CHEBI:30616"/>
    </ligand>
</feature>
<accession>Q75JQ1</accession>
<accession>Q559M8</accession>
<reference key="1">
    <citation type="journal article" date="2002" name="Nature">
        <title>Sequence and analysis of chromosome 2 of Dictyostelium discoideum.</title>
        <authorList>
            <person name="Gloeckner G."/>
            <person name="Eichinger L."/>
            <person name="Szafranski K."/>
            <person name="Pachebat J.A."/>
            <person name="Bankier A.T."/>
            <person name="Dear P.H."/>
            <person name="Lehmann R."/>
            <person name="Baumgart C."/>
            <person name="Parra G."/>
            <person name="Abril J.F."/>
            <person name="Guigo R."/>
            <person name="Kumpf K."/>
            <person name="Tunggal B."/>
            <person name="Cox E.C."/>
            <person name="Quail M.A."/>
            <person name="Platzer M."/>
            <person name="Rosenthal A."/>
            <person name="Noegel A.A."/>
        </authorList>
    </citation>
    <scope>NUCLEOTIDE SEQUENCE [LARGE SCALE GENOMIC DNA]</scope>
    <source>
        <strain>AX4</strain>
    </source>
</reference>
<reference key="2">
    <citation type="journal article" date="2005" name="Nature">
        <title>The genome of the social amoeba Dictyostelium discoideum.</title>
        <authorList>
            <person name="Eichinger L."/>
            <person name="Pachebat J.A."/>
            <person name="Gloeckner G."/>
            <person name="Rajandream M.A."/>
            <person name="Sucgang R."/>
            <person name="Berriman M."/>
            <person name="Song J."/>
            <person name="Olsen R."/>
            <person name="Szafranski K."/>
            <person name="Xu Q."/>
            <person name="Tunggal B."/>
            <person name="Kummerfeld S."/>
            <person name="Madera M."/>
            <person name="Konfortov B.A."/>
            <person name="Rivero F."/>
            <person name="Bankier A.T."/>
            <person name="Lehmann R."/>
            <person name="Hamlin N."/>
            <person name="Davies R."/>
            <person name="Gaudet P."/>
            <person name="Fey P."/>
            <person name="Pilcher K."/>
            <person name="Chen G."/>
            <person name="Saunders D."/>
            <person name="Sodergren E.J."/>
            <person name="Davis P."/>
            <person name="Kerhornou A."/>
            <person name="Nie X."/>
            <person name="Hall N."/>
            <person name="Anjard C."/>
            <person name="Hemphill L."/>
            <person name="Bason N."/>
            <person name="Farbrother P."/>
            <person name="Desany B."/>
            <person name="Just E."/>
            <person name="Morio T."/>
            <person name="Rost R."/>
            <person name="Churcher C.M."/>
            <person name="Cooper J."/>
            <person name="Haydock S."/>
            <person name="van Driessche N."/>
            <person name="Cronin A."/>
            <person name="Goodhead I."/>
            <person name="Muzny D.M."/>
            <person name="Mourier T."/>
            <person name="Pain A."/>
            <person name="Lu M."/>
            <person name="Harper D."/>
            <person name="Lindsay R."/>
            <person name="Hauser H."/>
            <person name="James K.D."/>
            <person name="Quiles M."/>
            <person name="Madan Babu M."/>
            <person name="Saito T."/>
            <person name="Buchrieser C."/>
            <person name="Wardroper A."/>
            <person name="Felder M."/>
            <person name="Thangavelu M."/>
            <person name="Johnson D."/>
            <person name="Knights A."/>
            <person name="Loulseged H."/>
            <person name="Mungall K.L."/>
            <person name="Oliver K."/>
            <person name="Price C."/>
            <person name="Quail M.A."/>
            <person name="Urushihara H."/>
            <person name="Hernandez J."/>
            <person name="Rabbinowitsch E."/>
            <person name="Steffen D."/>
            <person name="Sanders M."/>
            <person name="Ma J."/>
            <person name="Kohara Y."/>
            <person name="Sharp S."/>
            <person name="Simmonds M.N."/>
            <person name="Spiegler S."/>
            <person name="Tivey A."/>
            <person name="Sugano S."/>
            <person name="White B."/>
            <person name="Walker D."/>
            <person name="Woodward J.R."/>
            <person name="Winckler T."/>
            <person name="Tanaka Y."/>
            <person name="Shaulsky G."/>
            <person name="Schleicher M."/>
            <person name="Weinstock G.M."/>
            <person name="Rosenthal A."/>
            <person name="Cox E.C."/>
            <person name="Chisholm R.L."/>
            <person name="Gibbs R.A."/>
            <person name="Loomis W.F."/>
            <person name="Platzer M."/>
            <person name="Kay R.R."/>
            <person name="Williams J.G."/>
            <person name="Dear P.H."/>
            <person name="Noegel A.A."/>
            <person name="Barrell B.G."/>
            <person name="Kuspa A."/>
        </authorList>
    </citation>
    <scope>NUCLEOTIDE SEQUENCE [LARGE SCALE GENOMIC DNA]</scope>
    <source>
        <strain>AX4</strain>
    </source>
</reference>
<name>SYDC1_DICDI</name>
<keyword id="KW-0030">Aminoacyl-tRNA synthetase</keyword>
<keyword id="KW-0067">ATP-binding</keyword>
<keyword id="KW-0963">Cytoplasm</keyword>
<keyword id="KW-0436">Ligase</keyword>
<keyword id="KW-0547">Nucleotide-binding</keyword>
<keyword id="KW-0648">Protein biosynthesis</keyword>
<keyword id="KW-1185">Reference proteome</keyword>
<gene>
    <name type="primary">aspS1</name>
    <name type="ORF">DDB_G0272236</name>
</gene>
<organism>
    <name type="scientific">Dictyostelium discoideum</name>
    <name type="common">Social amoeba</name>
    <dbReference type="NCBI Taxonomy" id="44689"/>
    <lineage>
        <taxon>Eukaryota</taxon>
        <taxon>Amoebozoa</taxon>
        <taxon>Evosea</taxon>
        <taxon>Eumycetozoa</taxon>
        <taxon>Dictyostelia</taxon>
        <taxon>Dictyosteliales</taxon>
        <taxon>Dictyosteliaceae</taxon>
        <taxon>Dictyostelium</taxon>
    </lineage>
</organism>
<evidence type="ECO:0000250" key="1"/>
<evidence type="ECO:0000256" key="2">
    <source>
        <dbReference type="SAM" id="MobiDB-lite"/>
    </source>
</evidence>
<evidence type="ECO:0000305" key="3"/>